<sequence>MIKLRLKRFGKKREVSYRIVATNSTSRRDGLPLEELGFYNPRTNETRLDVPAIVRRLQQGAQPTETVRSILRKAQIFEQLKA</sequence>
<name>RS16_SYNE7</name>
<feature type="chain" id="PRO_0000243886" description="Small ribosomal subunit protein bS16">
    <location>
        <begin position="1"/>
        <end position="82"/>
    </location>
</feature>
<gene>
    <name evidence="1" type="primary">rpsP</name>
    <name evidence="1" type="synonym">rps16</name>
    <name type="ordered locus">Synpcc7942_1772</name>
</gene>
<proteinExistence type="inferred from homology"/>
<protein>
    <recommendedName>
        <fullName evidence="1">Small ribosomal subunit protein bS16</fullName>
    </recommendedName>
    <alternativeName>
        <fullName evidence="2">30S ribosomal protein S16</fullName>
    </alternativeName>
</protein>
<reference key="1">
    <citation type="submission" date="2005-08" db="EMBL/GenBank/DDBJ databases">
        <title>Complete sequence of chromosome 1 of Synechococcus elongatus PCC 7942.</title>
        <authorList>
            <consortium name="US DOE Joint Genome Institute"/>
            <person name="Copeland A."/>
            <person name="Lucas S."/>
            <person name="Lapidus A."/>
            <person name="Barry K."/>
            <person name="Detter J.C."/>
            <person name="Glavina T."/>
            <person name="Hammon N."/>
            <person name="Israni S."/>
            <person name="Pitluck S."/>
            <person name="Schmutz J."/>
            <person name="Larimer F."/>
            <person name="Land M."/>
            <person name="Kyrpides N."/>
            <person name="Lykidis A."/>
            <person name="Golden S."/>
            <person name="Richardson P."/>
        </authorList>
    </citation>
    <scope>NUCLEOTIDE SEQUENCE [LARGE SCALE GENOMIC DNA]</scope>
    <source>
        <strain>ATCC 33912 / PCC 7942 / FACHB-805</strain>
    </source>
</reference>
<keyword id="KW-1185">Reference proteome</keyword>
<keyword id="KW-0687">Ribonucleoprotein</keyword>
<keyword id="KW-0689">Ribosomal protein</keyword>
<organism>
    <name type="scientific">Synechococcus elongatus (strain ATCC 33912 / PCC 7942 / FACHB-805)</name>
    <name type="common">Anacystis nidulans R2</name>
    <dbReference type="NCBI Taxonomy" id="1140"/>
    <lineage>
        <taxon>Bacteria</taxon>
        <taxon>Bacillati</taxon>
        <taxon>Cyanobacteriota</taxon>
        <taxon>Cyanophyceae</taxon>
        <taxon>Synechococcales</taxon>
        <taxon>Synechococcaceae</taxon>
        <taxon>Synechococcus</taxon>
    </lineage>
</organism>
<comment type="similarity">
    <text evidence="1">Belongs to the bacterial ribosomal protein bS16 family.</text>
</comment>
<dbReference type="EMBL" id="CP000100">
    <property type="protein sequence ID" value="ABB57802.1"/>
    <property type="molecule type" value="Genomic_DNA"/>
</dbReference>
<dbReference type="RefSeq" id="WP_011244630.1">
    <property type="nucleotide sequence ID" value="NZ_JACJTX010000001.1"/>
</dbReference>
<dbReference type="SMR" id="Q31MB7"/>
<dbReference type="STRING" id="1140.Synpcc7942_1772"/>
<dbReference type="PaxDb" id="1140-Synpcc7942_1772"/>
<dbReference type="GeneID" id="72430643"/>
<dbReference type="KEGG" id="syf:Synpcc7942_1772"/>
<dbReference type="eggNOG" id="COG0228">
    <property type="taxonomic scope" value="Bacteria"/>
</dbReference>
<dbReference type="HOGENOM" id="CLU_100590_5_2_3"/>
<dbReference type="OrthoDB" id="9807878at2"/>
<dbReference type="BioCyc" id="SYNEL:SYNPCC7942_1772-MONOMER"/>
<dbReference type="Proteomes" id="UP000889800">
    <property type="component" value="Chromosome"/>
</dbReference>
<dbReference type="GO" id="GO:0005737">
    <property type="term" value="C:cytoplasm"/>
    <property type="evidence" value="ECO:0007669"/>
    <property type="project" value="UniProtKB-ARBA"/>
</dbReference>
<dbReference type="GO" id="GO:0015935">
    <property type="term" value="C:small ribosomal subunit"/>
    <property type="evidence" value="ECO:0007669"/>
    <property type="project" value="TreeGrafter"/>
</dbReference>
<dbReference type="GO" id="GO:0003735">
    <property type="term" value="F:structural constituent of ribosome"/>
    <property type="evidence" value="ECO:0007669"/>
    <property type="project" value="InterPro"/>
</dbReference>
<dbReference type="GO" id="GO:0006412">
    <property type="term" value="P:translation"/>
    <property type="evidence" value="ECO:0007669"/>
    <property type="project" value="UniProtKB-UniRule"/>
</dbReference>
<dbReference type="FunFam" id="3.30.1320.10:FF:000016">
    <property type="entry name" value="30S ribosomal protein S16"/>
    <property type="match status" value="1"/>
</dbReference>
<dbReference type="Gene3D" id="3.30.1320.10">
    <property type="match status" value="1"/>
</dbReference>
<dbReference type="HAMAP" id="MF_00385">
    <property type="entry name" value="Ribosomal_bS16"/>
    <property type="match status" value="1"/>
</dbReference>
<dbReference type="InterPro" id="IPR000307">
    <property type="entry name" value="Ribosomal_bS16"/>
</dbReference>
<dbReference type="InterPro" id="IPR020592">
    <property type="entry name" value="Ribosomal_bS16_CS"/>
</dbReference>
<dbReference type="InterPro" id="IPR023803">
    <property type="entry name" value="Ribosomal_bS16_dom_sf"/>
</dbReference>
<dbReference type="NCBIfam" id="TIGR00002">
    <property type="entry name" value="S16"/>
    <property type="match status" value="1"/>
</dbReference>
<dbReference type="PANTHER" id="PTHR12919">
    <property type="entry name" value="30S RIBOSOMAL PROTEIN S16"/>
    <property type="match status" value="1"/>
</dbReference>
<dbReference type="PANTHER" id="PTHR12919:SF20">
    <property type="entry name" value="SMALL RIBOSOMAL SUBUNIT PROTEIN BS16M"/>
    <property type="match status" value="1"/>
</dbReference>
<dbReference type="Pfam" id="PF00886">
    <property type="entry name" value="Ribosomal_S16"/>
    <property type="match status" value="1"/>
</dbReference>
<dbReference type="SUPFAM" id="SSF54565">
    <property type="entry name" value="Ribosomal protein S16"/>
    <property type="match status" value="1"/>
</dbReference>
<dbReference type="PROSITE" id="PS00732">
    <property type="entry name" value="RIBOSOMAL_S16"/>
    <property type="match status" value="1"/>
</dbReference>
<accession>Q31MB7</accession>
<evidence type="ECO:0000255" key="1">
    <source>
        <dbReference type="HAMAP-Rule" id="MF_00385"/>
    </source>
</evidence>
<evidence type="ECO:0000305" key="2"/>